<proteinExistence type="inferred from homology"/>
<evidence type="ECO:0000250" key="1"/>
<evidence type="ECO:0000269" key="2">
    <source>
    </source>
</evidence>
<evidence type="ECO:0000305" key="3"/>
<accession>O68887</accession>
<keyword id="KW-0963">Cytoplasm</keyword>
<keyword id="KW-0238">DNA-binding</keyword>
<keyword id="KW-0731">Sigma factor</keyword>
<keyword id="KW-0804">Transcription</keyword>
<keyword id="KW-0805">Transcription regulation</keyword>
<protein>
    <recommendedName>
        <fullName>RNA polymerase sigma-E factor</fullName>
    </recommendedName>
</protein>
<reference key="1">
    <citation type="journal article" date="1997" name="Mol. Microbiol.">
        <title>Sigma-E is required for the production of the antibiotic actinomycin in Streptomyces antibioticus.</title>
        <authorList>
            <person name="Jones G.H."/>
            <person name="Paget M.S."/>
            <person name="Chamberlin L."/>
            <person name="Buttner M.J."/>
        </authorList>
    </citation>
    <scope>NUCLEOTIDE SEQUENCE [GENOMIC DNA]</scope>
    <scope>ROLE IN THE PRODUCTION OF ACTINOMYCIN</scope>
    <source>
        <strain>IMRU3720</strain>
    </source>
</reference>
<reference key="2">
    <citation type="journal article" date="2001" name="Biochim. Biophys. Acta">
        <title>Transcriptional analysis and regulation of the sigma-E gene of Streptomyces antibioticus.</title>
        <authorList>
            <person name="Bralley P."/>
            <person name="Jones G.H."/>
        </authorList>
    </citation>
    <scope>NUCLEOTIDE SEQUENCE [GENOMIC DNA]</scope>
    <source>
        <strain>IMRU3720</strain>
    </source>
</reference>
<feature type="chain" id="PRO_0000314476" description="RNA polymerase sigma-E factor">
    <location>
        <begin position="1"/>
        <end position="180"/>
    </location>
</feature>
<feature type="DNA-binding region" description="H-T-H motif" evidence="1">
    <location>
        <begin position="130"/>
        <end position="149"/>
    </location>
</feature>
<feature type="short sequence motif" description="Polymerase core binding">
    <location>
        <begin position="36"/>
        <end position="49"/>
    </location>
</feature>
<sequence>MAQGEVLEFEEIVRTRQDALLRTPPGLVPDPVDAQDLLQTALARTYGRWEGIADKRLADAYLRRVMINTRTEWWRARKLEEVPTEQLPDARVEDSTEQHADRALLMDAMKVLAPKQRSVVVLRHWEQMSTEETAAALGMSAGTVKSTLHRALARLREELETRDLDARALEREERERCAAA</sequence>
<name>RPOE_STRAT</name>
<gene>
    <name type="primary">sigE</name>
</gene>
<dbReference type="EMBL" id="AF056199">
    <property type="protein sequence ID" value="AAC14121.1"/>
    <property type="molecule type" value="Genomic_DNA"/>
</dbReference>
<dbReference type="SMR" id="O68887"/>
<dbReference type="STRING" id="1890.AFM16_21765"/>
<dbReference type="GO" id="GO:0005737">
    <property type="term" value="C:cytoplasm"/>
    <property type="evidence" value="ECO:0007669"/>
    <property type="project" value="UniProtKB-SubCell"/>
</dbReference>
<dbReference type="GO" id="GO:0003677">
    <property type="term" value="F:DNA binding"/>
    <property type="evidence" value="ECO:0007669"/>
    <property type="project" value="UniProtKB-KW"/>
</dbReference>
<dbReference type="GO" id="GO:0016987">
    <property type="term" value="F:sigma factor activity"/>
    <property type="evidence" value="ECO:0007669"/>
    <property type="project" value="UniProtKB-KW"/>
</dbReference>
<dbReference type="GO" id="GO:0006352">
    <property type="term" value="P:DNA-templated transcription initiation"/>
    <property type="evidence" value="ECO:0007669"/>
    <property type="project" value="InterPro"/>
</dbReference>
<dbReference type="GO" id="GO:0006950">
    <property type="term" value="P:response to stress"/>
    <property type="evidence" value="ECO:0007669"/>
    <property type="project" value="UniProtKB-ARBA"/>
</dbReference>
<dbReference type="CDD" id="cd06171">
    <property type="entry name" value="Sigma70_r4"/>
    <property type="match status" value="1"/>
</dbReference>
<dbReference type="Gene3D" id="1.10.1740.10">
    <property type="match status" value="1"/>
</dbReference>
<dbReference type="Gene3D" id="1.10.10.10">
    <property type="entry name" value="Winged helix-like DNA-binding domain superfamily/Winged helix DNA-binding domain"/>
    <property type="match status" value="1"/>
</dbReference>
<dbReference type="InterPro" id="IPR039425">
    <property type="entry name" value="RNA_pol_sigma-70-like"/>
</dbReference>
<dbReference type="InterPro" id="IPR014284">
    <property type="entry name" value="RNA_pol_sigma-70_dom"/>
</dbReference>
<dbReference type="InterPro" id="IPR014325">
    <property type="entry name" value="RNA_pol_sigma-E_actinobac"/>
</dbReference>
<dbReference type="InterPro" id="IPR000838">
    <property type="entry name" value="RNA_pol_sigma70_ECF_CS"/>
</dbReference>
<dbReference type="InterPro" id="IPR013249">
    <property type="entry name" value="RNA_pol_sigma70_r4_t2"/>
</dbReference>
<dbReference type="InterPro" id="IPR013325">
    <property type="entry name" value="RNA_pol_sigma_r2"/>
</dbReference>
<dbReference type="InterPro" id="IPR013324">
    <property type="entry name" value="RNA_pol_sigma_r3/r4-like"/>
</dbReference>
<dbReference type="InterPro" id="IPR036388">
    <property type="entry name" value="WH-like_DNA-bd_sf"/>
</dbReference>
<dbReference type="NCBIfam" id="TIGR02983">
    <property type="entry name" value="SigE-fam_strep"/>
    <property type="match status" value="1"/>
</dbReference>
<dbReference type="NCBIfam" id="TIGR02937">
    <property type="entry name" value="sigma70-ECF"/>
    <property type="match status" value="1"/>
</dbReference>
<dbReference type="PANTHER" id="PTHR43133:SF50">
    <property type="entry name" value="ECF RNA POLYMERASE SIGMA FACTOR SIGM"/>
    <property type="match status" value="1"/>
</dbReference>
<dbReference type="PANTHER" id="PTHR43133">
    <property type="entry name" value="RNA POLYMERASE ECF-TYPE SIGMA FACTO"/>
    <property type="match status" value="1"/>
</dbReference>
<dbReference type="Pfam" id="PF08281">
    <property type="entry name" value="Sigma70_r4_2"/>
    <property type="match status" value="1"/>
</dbReference>
<dbReference type="SUPFAM" id="SSF88946">
    <property type="entry name" value="Sigma2 domain of RNA polymerase sigma factors"/>
    <property type="match status" value="1"/>
</dbReference>
<dbReference type="SUPFAM" id="SSF88659">
    <property type="entry name" value="Sigma3 and sigma4 domains of RNA polymerase sigma factors"/>
    <property type="match status" value="1"/>
</dbReference>
<dbReference type="PROSITE" id="PS01063">
    <property type="entry name" value="SIGMA70_ECF"/>
    <property type="match status" value="1"/>
</dbReference>
<comment type="function">
    <text evidence="2">Sigma factors are initiation factors that promote the attachment of RNA polymerase to specific initiation sites and are then released. This sigma factor is required for the synthesis of the antibiotic actinomycin.</text>
</comment>
<comment type="subcellular location">
    <subcellularLocation>
        <location evidence="3">Cytoplasm</location>
    </subcellularLocation>
</comment>
<comment type="similarity">
    <text evidence="3">Belongs to the sigma-70 factor family. ECF subfamily.</text>
</comment>
<organism>
    <name type="scientific">Streptomyces antibioticus</name>
    <dbReference type="NCBI Taxonomy" id="1890"/>
    <lineage>
        <taxon>Bacteria</taxon>
        <taxon>Bacillati</taxon>
        <taxon>Actinomycetota</taxon>
        <taxon>Actinomycetes</taxon>
        <taxon>Kitasatosporales</taxon>
        <taxon>Streptomycetaceae</taxon>
        <taxon>Streptomyces</taxon>
    </lineage>
</organism>